<sequence>MDPESLGVRDSDLVRAGLAIGVAILAIIVLFPGIRYKGGLVNNKKPFELSWTNAKRRFQSGARGLITTAFNQNDGKHKDAFYMVTDNGVEMIIHPKYAHEIRNDERFSISAYNEQSFHGRIPGFEMFKENVVEEQLFINAVRSRLTRSLGKLLGPISEEVTSALRQHWTDNKEWHSISLHSAVLPVIAQQSSRVFLGEELCHNADWMRITVNHTVSFFMAVEALRVWPKILRPLAARFSPMCKNLRAEIEEARRIITPILENRRAQQQAHSKHAASTRPNDLIEWLEETADGRSYDAARAQLKISVAAIHTTSDLLTQTLFNIADKPALIQDLRKEIMSTIGTHGWEKAALYNLKLMDSVLKETQRLKPISIGTMVRVTLDDVTLSDGLRIPKGTKTLVSCHNMWDKGIYDHADQFDGYRFYELRKLPGQENSSQLVSTSPDHFAFGHGLHACPGRFFAAAEVKITLCHILLKYDIRLVGERPNVIEHGVAQYANAWGQIEIKRREEEIAL</sequence>
<dbReference type="EC" id="1.-.-.-" evidence="3"/>
<dbReference type="EMBL" id="LC600199">
    <property type="protein sequence ID" value="BCP96878.1"/>
    <property type="molecule type" value="Genomic_DNA"/>
</dbReference>
<dbReference type="SMR" id="A0A8D5RY40"/>
<dbReference type="UniPathway" id="UPA00213"/>
<dbReference type="GO" id="GO:0016020">
    <property type="term" value="C:membrane"/>
    <property type="evidence" value="ECO:0007669"/>
    <property type="project" value="UniProtKB-SubCell"/>
</dbReference>
<dbReference type="GO" id="GO:0020037">
    <property type="term" value="F:heme binding"/>
    <property type="evidence" value="ECO:0007669"/>
    <property type="project" value="InterPro"/>
</dbReference>
<dbReference type="GO" id="GO:0005506">
    <property type="term" value="F:iron ion binding"/>
    <property type="evidence" value="ECO:0007669"/>
    <property type="project" value="InterPro"/>
</dbReference>
<dbReference type="GO" id="GO:0004497">
    <property type="term" value="F:monooxygenase activity"/>
    <property type="evidence" value="ECO:0007669"/>
    <property type="project" value="UniProtKB-KW"/>
</dbReference>
<dbReference type="GO" id="GO:0016705">
    <property type="term" value="F:oxidoreductase activity, acting on paired donors, with incorporation or reduction of molecular oxygen"/>
    <property type="evidence" value="ECO:0007669"/>
    <property type="project" value="InterPro"/>
</dbReference>
<dbReference type="GO" id="GO:0043386">
    <property type="term" value="P:mycotoxin biosynthetic process"/>
    <property type="evidence" value="ECO:0007669"/>
    <property type="project" value="UniProtKB-ARBA"/>
</dbReference>
<dbReference type="CDD" id="cd11041">
    <property type="entry name" value="CYP503A1-like"/>
    <property type="match status" value="1"/>
</dbReference>
<dbReference type="Gene3D" id="1.10.630.10">
    <property type="entry name" value="Cytochrome P450"/>
    <property type="match status" value="1"/>
</dbReference>
<dbReference type="InterPro" id="IPR001128">
    <property type="entry name" value="Cyt_P450"/>
</dbReference>
<dbReference type="InterPro" id="IPR017972">
    <property type="entry name" value="Cyt_P450_CS"/>
</dbReference>
<dbReference type="InterPro" id="IPR002403">
    <property type="entry name" value="Cyt_P450_E_grp-IV"/>
</dbReference>
<dbReference type="InterPro" id="IPR036396">
    <property type="entry name" value="Cyt_P450_sf"/>
</dbReference>
<dbReference type="PANTHER" id="PTHR46206">
    <property type="entry name" value="CYTOCHROME P450"/>
    <property type="match status" value="1"/>
</dbReference>
<dbReference type="PANTHER" id="PTHR46206:SF2">
    <property type="entry name" value="CYTOCHROME P450 MONOOXYGENASE AUSG-RELATED"/>
    <property type="match status" value="1"/>
</dbReference>
<dbReference type="Pfam" id="PF00067">
    <property type="entry name" value="p450"/>
    <property type="match status" value="1"/>
</dbReference>
<dbReference type="PRINTS" id="PR00465">
    <property type="entry name" value="EP450IV"/>
</dbReference>
<dbReference type="PRINTS" id="PR00385">
    <property type="entry name" value="P450"/>
</dbReference>
<dbReference type="SUPFAM" id="SSF48264">
    <property type="entry name" value="Cytochrome P450"/>
    <property type="match status" value="1"/>
</dbReference>
<dbReference type="PROSITE" id="PS00086">
    <property type="entry name" value="CYTOCHROME_P450"/>
    <property type="match status" value="1"/>
</dbReference>
<name>ESDPI_PENSH</name>
<comment type="function">
    <text evidence="3">Cytochrome P450 monooxygenase; part of the cluster that mediates the biosynthesis of shearones, diterpenoid pyrones (DPs) which are structurally diverse meroterpenoids consisting of a diterpene linked by a pyrone, and which may exhibit a range of bioactivities (PubMed:35057611). Whitin the pathway, esdpI takes part in the molecular scaffold modification via the hydroxylation at C-20 and can transform shearone C into shearone G (PubMed:35057611). The molecular scaffold is commonly biosynthesized by a series of enzymes including the non-reducing polyketide synthase (NR-PKS) esdpA that generates an alpha-pyrone; the prenyltransferase esdpC that attaches a geranylgeranyl pyrophosphate (GGPP) produced by the GGPP synthase (GGPPS) esdpD onto the pyrone unit; the FAD-dependent monooxygenase esdpE that converts an olefin on the diterpene unit into an epoxide; and the terpene cyclase esdpB that catalyzes the cyclization reactions to give the molecular backbone shearone A (PubMed:35057611). In the modification steps, esdpF oxidizes the hydroxy group to a ketone at C-3 and esdpG then attaches hydroxy groups at both C-11 and C-12. After that, esdpI hydroxylates at C-20 and esdpH hydroxylates at C-6'. The ether bridge is generated by nucleophilic attack of the hydroxy group at C-20 to the carbonyl carbon at C-3. EsdpH can also functions prior to esdpI. The different combinations of these modification enzymes lead to the production of diverse shearone derivatives, shearone I being the end product of the pathway (PubMed:35057611). The alpha-ketoglutarate-dependent dioxygenase esdpJ seems not to be involved in this pathway (PubMed:35057611).</text>
</comment>
<comment type="cofactor">
    <cofactor evidence="1">
        <name>heme</name>
        <dbReference type="ChEBI" id="CHEBI:30413"/>
    </cofactor>
</comment>
<comment type="pathway">
    <text evidence="3">Secondary metabolite biosynthesis; terpenoid biosynthesis.</text>
</comment>
<comment type="subcellular location">
    <subcellularLocation>
        <location evidence="2">Membrane</location>
        <topology evidence="2">Single-pass membrane protein</topology>
    </subcellularLocation>
</comment>
<comment type="biotechnology">
    <text evidence="3">Shearone derivatives produced by this cluster are interesting candidates for Alzheimer's disease (AD) therapy since they moderately inhibit aggregation of amyloid beta 42 (Abeta42).</text>
</comment>
<comment type="similarity">
    <text evidence="5">Belongs to the cytochrome P450 family.</text>
</comment>
<evidence type="ECO:0000250" key="1">
    <source>
        <dbReference type="UniProtKB" id="P04798"/>
    </source>
</evidence>
<evidence type="ECO:0000255" key="2"/>
<evidence type="ECO:0000269" key="3">
    <source>
    </source>
</evidence>
<evidence type="ECO:0000303" key="4">
    <source>
    </source>
</evidence>
<evidence type="ECO:0000305" key="5"/>
<keyword id="KW-0349">Heme</keyword>
<keyword id="KW-0408">Iron</keyword>
<keyword id="KW-0472">Membrane</keyword>
<keyword id="KW-0479">Metal-binding</keyword>
<keyword id="KW-0503">Monooxygenase</keyword>
<keyword id="KW-0560">Oxidoreductase</keyword>
<keyword id="KW-0812">Transmembrane</keyword>
<keyword id="KW-1133">Transmembrane helix</keyword>
<reference key="1">
    <citation type="journal article" date="2022" name="J. Nat. Prod.">
        <title>Synthetic biology-based discovery of diterpenoid pyrones from the genome of Eupenicillium shearii.</title>
        <authorList>
            <person name="Morishita Y."/>
            <person name="Tsukada K."/>
            <person name="Murakami K."/>
            <person name="Irie K."/>
            <person name="Asai T."/>
        </authorList>
    </citation>
    <scope>NUCLEOTIDE SEQUENCE [GENOMIC DNA]</scope>
    <scope>FUNCTION</scope>
    <scope>CATALYTIC ACTIVITY</scope>
    <scope>PATHWAY</scope>
    <scope>BIOTECHNOLOGY</scope>
    <source>
        <strain>IFM 42152</strain>
    </source>
</reference>
<protein>
    <recommendedName>
        <fullName evidence="4">Cytochrome P450 monooxygenase esdpI</fullName>
        <ecNumber evidence="3">1.-.-.-</ecNumber>
    </recommendedName>
    <alternativeName>
        <fullName evidence="4">Shearone I biosynthesis cluster protein I</fullName>
    </alternativeName>
</protein>
<proteinExistence type="evidence at protein level"/>
<gene>
    <name evidence="4" type="primary">esdpI</name>
</gene>
<organism>
    <name type="scientific">Penicillium shearii</name>
    <name type="common">Eupenicillium shearii</name>
    <dbReference type="NCBI Taxonomy" id="904690"/>
    <lineage>
        <taxon>Eukaryota</taxon>
        <taxon>Fungi</taxon>
        <taxon>Dikarya</taxon>
        <taxon>Ascomycota</taxon>
        <taxon>Pezizomycotina</taxon>
        <taxon>Eurotiomycetes</taxon>
        <taxon>Eurotiomycetidae</taxon>
        <taxon>Eurotiales</taxon>
        <taxon>Aspergillaceae</taxon>
        <taxon>Penicillium</taxon>
    </lineage>
</organism>
<accession>A0A8D5RY40</accession>
<feature type="chain" id="PRO_0000461041" description="Cytochrome P450 monooxygenase esdpI">
    <location>
        <begin position="1"/>
        <end position="511"/>
    </location>
</feature>
<feature type="transmembrane region" description="Helical" evidence="2">
    <location>
        <begin position="14"/>
        <end position="34"/>
    </location>
</feature>
<feature type="binding site" description="axial binding residue" evidence="1">
    <location>
        <position position="453"/>
    </location>
    <ligand>
        <name>heme</name>
        <dbReference type="ChEBI" id="CHEBI:30413"/>
    </ligand>
    <ligandPart>
        <name>Fe</name>
        <dbReference type="ChEBI" id="CHEBI:18248"/>
    </ligandPart>
</feature>